<gene>
    <name evidence="2" type="primary">crtP</name>
    <name evidence="5" type="synonym">CrtOx</name>
    <name type="ordered locus">SAV2564</name>
</gene>
<dbReference type="EC" id="1.14.99.-" evidence="7"/>
<dbReference type="EMBL" id="BA000017">
    <property type="protein sequence ID" value="BAB58726.1"/>
    <property type="molecule type" value="Genomic_DNA"/>
</dbReference>
<dbReference type="RefSeq" id="WP_000160471.1">
    <property type="nucleotide sequence ID" value="NC_002758.2"/>
</dbReference>
<dbReference type="SMR" id="Q99R73"/>
<dbReference type="KEGG" id="sav:SAV2564"/>
<dbReference type="HOGENOM" id="CLU_019722_2_1_9"/>
<dbReference type="PhylomeDB" id="Q99R73"/>
<dbReference type="UniPathway" id="UPA00029">
    <property type="reaction ID" value="UER00558"/>
</dbReference>
<dbReference type="Proteomes" id="UP000002481">
    <property type="component" value="Chromosome"/>
</dbReference>
<dbReference type="GO" id="GO:0016491">
    <property type="term" value="F:oxidoreductase activity"/>
    <property type="evidence" value="ECO:0007669"/>
    <property type="project" value="UniProtKB-KW"/>
</dbReference>
<dbReference type="GO" id="GO:0016117">
    <property type="term" value="P:carotenoid biosynthetic process"/>
    <property type="evidence" value="ECO:0007669"/>
    <property type="project" value="UniProtKB-KW"/>
</dbReference>
<dbReference type="Gene3D" id="3.50.50.60">
    <property type="entry name" value="FAD/NAD(P)-binding domain"/>
    <property type="match status" value="2"/>
</dbReference>
<dbReference type="InterPro" id="IPR002937">
    <property type="entry name" value="Amino_oxidase"/>
</dbReference>
<dbReference type="InterPro" id="IPR014105">
    <property type="entry name" value="Carotenoid/retinoid_OxRdtase"/>
</dbReference>
<dbReference type="InterPro" id="IPR036188">
    <property type="entry name" value="FAD/NAD-bd_sf"/>
</dbReference>
<dbReference type="NCBIfam" id="TIGR02734">
    <property type="entry name" value="crtI_fam"/>
    <property type="match status" value="1"/>
</dbReference>
<dbReference type="PANTHER" id="PTHR43734:SF7">
    <property type="entry name" value="4,4'-DIAPONEUROSPORENE OXYGENASE"/>
    <property type="match status" value="1"/>
</dbReference>
<dbReference type="PANTHER" id="PTHR43734">
    <property type="entry name" value="PHYTOENE DESATURASE"/>
    <property type="match status" value="1"/>
</dbReference>
<dbReference type="Pfam" id="PF01593">
    <property type="entry name" value="Amino_oxidase"/>
    <property type="match status" value="1"/>
</dbReference>
<dbReference type="SUPFAM" id="SSF51905">
    <property type="entry name" value="FAD/NAD(P)-binding domain"/>
    <property type="match status" value="1"/>
</dbReference>
<accession>Q99R73</accession>
<reference key="1">
    <citation type="journal article" date="2001" name="Lancet">
        <title>Whole genome sequencing of meticillin-resistant Staphylococcus aureus.</title>
        <authorList>
            <person name="Kuroda M."/>
            <person name="Ohta T."/>
            <person name="Uchiyama I."/>
            <person name="Baba T."/>
            <person name="Yuzawa H."/>
            <person name="Kobayashi I."/>
            <person name="Cui L."/>
            <person name="Oguchi A."/>
            <person name="Aoki K."/>
            <person name="Nagai Y."/>
            <person name="Lian J.-Q."/>
            <person name="Ito T."/>
            <person name="Kanamori M."/>
            <person name="Matsumaru H."/>
            <person name="Maruyama A."/>
            <person name="Murakami H."/>
            <person name="Hosoyama A."/>
            <person name="Mizutani-Ui Y."/>
            <person name="Takahashi N.K."/>
            <person name="Sawano T."/>
            <person name="Inoue R."/>
            <person name="Kaito C."/>
            <person name="Sekimizu K."/>
            <person name="Hirakawa H."/>
            <person name="Kuhara S."/>
            <person name="Goto S."/>
            <person name="Yabuzaki J."/>
            <person name="Kanehisa M."/>
            <person name="Yamashita A."/>
            <person name="Oshima K."/>
            <person name="Furuya K."/>
            <person name="Yoshino C."/>
            <person name="Shiba T."/>
            <person name="Hattori M."/>
            <person name="Ogasawara N."/>
            <person name="Hayashi H."/>
            <person name="Hiramatsu K."/>
        </authorList>
    </citation>
    <scope>NUCLEOTIDE SEQUENCE [LARGE SCALE GENOMIC DNA]</scope>
    <source>
        <strain>Mu50 / ATCC 700699</strain>
    </source>
</reference>
<reference key="2">
    <citation type="journal article" date="2005" name="Chem. Biol.">
        <title>Identification of a carotenoid oxygenase synthesizing acyclic xanthophylls: combinatorial biosynthesis and directed evolution.</title>
        <authorList>
            <person name="Mijts B.N."/>
            <person name="Lee P.C."/>
            <person name="Schmidt-Dannert C."/>
        </authorList>
    </citation>
    <scope>FUNCTION</scope>
    <scope>CATALYTIC ACTIVITY</scope>
    <scope>SUBSTRATE SPECIFICITY</scope>
    <scope>PATHWAY</scope>
</reference>
<sequence length="497" mass="57174">MTKHIIVIGGGLGGISAAIRMAQSGYSVSLYEQNTHIGGKVNRHESDGFGFDLGPSILTMPYIFEKLFEYSKKQMSDYVTIKRLPHQWRSFFPDGTTIDLYEGIKETGQHNAILSKQDIEELQNYLNYTRRIDRITEKGYFNYGLDTLSQIIKFHGPLNALINYDYVHTMQQAIDKRISNPYLRQMLGYFIKYVGSSSYDAPAVLSMLFHMQQEQGLWYVEGGIHHLANALEKLAREEGVTIHTGARVDNIKTYQRRVTGVRLDTGEFVKADYIISNMEVIPTYKYLIHLDTQRLNKLEREFEPASSGYVMHLGVACQYPQLAHHNFFFTENAYLNYQQVFHEKVLPDDPTIYLVNTNKTDHTQAPVGYENIKVLPHIPYIQDQPFTTEDYAKFRDKILDKLEKMGLTDLRKHIIYEDVWTPEDIEKNYRSNRGAIYGVVADKKKNKGFKFPKESQYFENLYFVGGSVNPGGGMPMVTLSGQQVADKINAREAKNRK</sequence>
<protein>
    <recommendedName>
        <fullName evidence="7">4,4'-diaponeurosporene oxygenase</fullName>
        <ecNumber evidence="7">1.14.99.-</ecNumber>
    </recommendedName>
    <alternativeName>
        <fullName evidence="7">4,4'-diaponeurosporene oxidase</fullName>
    </alternativeName>
    <alternativeName>
        <fullName evidence="2">Carotenoid oxidase</fullName>
    </alternativeName>
    <alternativeName>
        <fullName evidence="5">Diapocarotenal synthase</fullName>
    </alternativeName>
</protein>
<comment type="function">
    <text evidence="4">Involved in the biosynthesis of the yellow-orange carotenoid staphyloxanthin, which plays a role in the virulence via its protective function against oxidative stress. Catalyzes the oxidation of the terminal methyl side group of 4,4'-diaponeurosporene to form 4,4'-diaponeurosporen-4-al. The C40 carotenoid lycopene is a poor substrate.</text>
</comment>
<comment type="catalytic activity">
    <reaction evidence="7">
        <text>all-trans-4,4'-diaponeurosporene + 2 AH2 + 2 O2 = 4,4'-diaponeurosporenal + 2 A + 3 H2O</text>
        <dbReference type="Rhea" id="RHEA:56104"/>
        <dbReference type="ChEBI" id="CHEBI:13193"/>
        <dbReference type="ChEBI" id="CHEBI:15377"/>
        <dbReference type="ChEBI" id="CHEBI:15379"/>
        <dbReference type="ChEBI" id="CHEBI:17499"/>
        <dbReference type="ChEBI" id="CHEBI:62743"/>
        <dbReference type="ChEBI" id="CHEBI:79065"/>
    </reaction>
</comment>
<comment type="cofactor">
    <cofactor evidence="1">
        <name>FAD</name>
        <dbReference type="ChEBI" id="CHEBI:57692"/>
    </cofactor>
</comment>
<comment type="pathway">
    <text evidence="7">Carotenoid biosynthesis; staphyloxanthin biosynthesis; staphyloxanthin from farnesyl diphosphate: step 3/5.</text>
</comment>
<comment type="similarity">
    <text evidence="6">Belongs to the carotenoid/retinoid oxidoreductase family. CrtP subfamily.</text>
</comment>
<proteinExistence type="evidence at protein level"/>
<organism>
    <name type="scientific">Staphylococcus aureus (strain Mu50 / ATCC 700699)</name>
    <dbReference type="NCBI Taxonomy" id="158878"/>
    <lineage>
        <taxon>Bacteria</taxon>
        <taxon>Bacillati</taxon>
        <taxon>Bacillota</taxon>
        <taxon>Bacilli</taxon>
        <taxon>Bacillales</taxon>
        <taxon>Staphylococcaceae</taxon>
        <taxon>Staphylococcus</taxon>
    </lineage>
</organism>
<feature type="chain" id="PRO_0000285228" description="4,4'-diaponeurosporene oxygenase">
    <location>
        <begin position="1"/>
        <end position="497"/>
    </location>
</feature>
<feature type="binding site" evidence="3">
    <location>
        <begin position="7"/>
        <end position="19"/>
    </location>
    <ligand>
        <name>FAD</name>
        <dbReference type="ChEBI" id="CHEBI:57692"/>
    </ligand>
</feature>
<keyword id="KW-0125">Carotenoid biosynthesis</keyword>
<keyword id="KW-0274">FAD</keyword>
<keyword id="KW-0285">Flavoprotein</keyword>
<keyword id="KW-0560">Oxidoreductase</keyword>
<keyword id="KW-0843">Virulence</keyword>
<name>CRTP_STAAM</name>
<evidence type="ECO:0000250" key="1">
    <source>
        <dbReference type="UniProtKB" id="P21685"/>
    </source>
</evidence>
<evidence type="ECO:0000250" key="2">
    <source>
        <dbReference type="UniProtKB" id="Q2FV57"/>
    </source>
</evidence>
<evidence type="ECO:0000255" key="3"/>
<evidence type="ECO:0000269" key="4">
    <source>
    </source>
</evidence>
<evidence type="ECO:0000303" key="5">
    <source>
    </source>
</evidence>
<evidence type="ECO:0000305" key="6"/>
<evidence type="ECO:0000305" key="7">
    <source>
    </source>
</evidence>